<protein>
    <recommendedName>
        <fullName evidence="1">Phosphopantetheine adenylyltransferase</fullName>
        <ecNumber evidence="1">2.7.7.3</ecNumber>
    </recommendedName>
    <alternativeName>
        <fullName evidence="1">Dephospho-CoA pyrophosphorylase</fullName>
    </alternativeName>
    <alternativeName>
        <fullName evidence="1">Pantetheine-phosphate adenylyltransferase</fullName>
        <shortName evidence="1">PPAT</shortName>
    </alternativeName>
</protein>
<proteinExistence type="inferred from homology"/>
<name>COAD_PROMP</name>
<evidence type="ECO:0000255" key="1">
    <source>
        <dbReference type="HAMAP-Rule" id="MF_00151"/>
    </source>
</evidence>
<organism>
    <name type="scientific">Prochlorococcus marinus subsp. pastoris (strain CCMP1986 / NIES-2087 / MED4)</name>
    <dbReference type="NCBI Taxonomy" id="59919"/>
    <lineage>
        <taxon>Bacteria</taxon>
        <taxon>Bacillati</taxon>
        <taxon>Cyanobacteriota</taxon>
        <taxon>Cyanophyceae</taxon>
        <taxon>Synechococcales</taxon>
        <taxon>Prochlorococcaceae</taxon>
        <taxon>Prochlorococcus</taxon>
    </lineage>
</organism>
<feature type="chain" id="PRO_0000156257" description="Phosphopantetheine adenylyltransferase">
    <location>
        <begin position="1"/>
        <end position="159"/>
    </location>
</feature>
<feature type="binding site" evidence="1">
    <location>
        <begin position="8"/>
        <end position="9"/>
    </location>
    <ligand>
        <name>ATP</name>
        <dbReference type="ChEBI" id="CHEBI:30616"/>
    </ligand>
</feature>
<feature type="binding site" evidence="1">
    <location>
        <position position="8"/>
    </location>
    <ligand>
        <name>substrate</name>
    </ligand>
</feature>
<feature type="binding site" evidence="1">
    <location>
        <position position="16"/>
    </location>
    <ligand>
        <name>ATP</name>
        <dbReference type="ChEBI" id="CHEBI:30616"/>
    </ligand>
</feature>
<feature type="binding site" evidence="1">
    <location>
        <position position="40"/>
    </location>
    <ligand>
        <name>substrate</name>
    </ligand>
</feature>
<feature type="binding site" evidence="1">
    <location>
        <position position="72"/>
    </location>
    <ligand>
        <name>substrate</name>
    </ligand>
</feature>
<feature type="binding site" evidence="1">
    <location>
        <position position="86"/>
    </location>
    <ligand>
        <name>substrate</name>
    </ligand>
</feature>
<feature type="binding site" evidence="1">
    <location>
        <begin position="87"/>
        <end position="89"/>
    </location>
    <ligand>
        <name>ATP</name>
        <dbReference type="ChEBI" id="CHEBI:30616"/>
    </ligand>
</feature>
<feature type="binding site" evidence="1">
    <location>
        <position position="97"/>
    </location>
    <ligand>
        <name>ATP</name>
        <dbReference type="ChEBI" id="CHEBI:30616"/>
    </ligand>
</feature>
<feature type="binding site" evidence="1">
    <location>
        <begin position="122"/>
        <end position="128"/>
    </location>
    <ligand>
        <name>ATP</name>
        <dbReference type="ChEBI" id="CHEBI:30616"/>
    </ligand>
</feature>
<feature type="site" description="Transition state stabilizer" evidence="1">
    <location>
        <position position="16"/>
    </location>
</feature>
<sequence length="159" mass="17896">MKILYPGTFDPLTNGHLDLIQRAEKLFGNVVVAVLENTSKKPTFNLNKRLVQIKNAVSHLSNISVISYEGLTVDCAKEVNANLILRGLRAMSDFEYELQIAHTNKSLNTEIETIFLSTNTNYSFLSSSLVKEVAKFGGEIDHMVPDSVERDLKNYFKKD</sequence>
<reference key="1">
    <citation type="journal article" date="2003" name="Nature">
        <title>Genome divergence in two Prochlorococcus ecotypes reflects oceanic niche differentiation.</title>
        <authorList>
            <person name="Rocap G."/>
            <person name="Larimer F.W."/>
            <person name="Lamerdin J.E."/>
            <person name="Malfatti S."/>
            <person name="Chain P."/>
            <person name="Ahlgren N.A."/>
            <person name="Arellano A."/>
            <person name="Coleman M."/>
            <person name="Hauser L."/>
            <person name="Hess W.R."/>
            <person name="Johnson Z.I."/>
            <person name="Land M.L."/>
            <person name="Lindell D."/>
            <person name="Post A.F."/>
            <person name="Regala W."/>
            <person name="Shah M."/>
            <person name="Shaw S.L."/>
            <person name="Steglich C."/>
            <person name="Sullivan M.B."/>
            <person name="Ting C.S."/>
            <person name="Tolonen A."/>
            <person name="Webb E.A."/>
            <person name="Zinser E.R."/>
            <person name="Chisholm S.W."/>
        </authorList>
    </citation>
    <scope>NUCLEOTIDE SEQUENCE [LARGE SCALE GENOMIC DNA]</scope>
    <source>
        <strain>CCMP1986 / NIES-2087 / MED4</strain>
    </source>
</reference>
<dbReference type="EC" id="2.7.7.3" evidence="1"/>
<dbReference type="EMBL" id="BX548174">
    <property type="protein sequence ID" value="CAE19343.1"/>
    <property type="molecule type" value="Genomic_DNA"/>
</dbReference>
<dbReference type="RefSeq" id="WP_011132517.1">
    <property type="nucleotide sequence ID" value="NC_005072.1"/>
</dbReference>
<dbReference type="SMR" id="Q7V1I7"/>
<dbReference type="STRING" id="59919.PMM0884"/>
<dbReference type="KEGG" id="pmm:PMM0884"/>
<dbReference type="eggNOG" id="COG0669">
    <property type="taxonomic scope" value="Bacteria"/>
</dbReference>
<dbReference type="HOGENOM" id="CLU_100149_0_1_3"/>
<dbReference type="OrthoDB" id="9806661at2"/>
<dbReference type="UniPathway" id="UPA00241">
    <property type="reaction ID" value="UER00355"/>
</dbReference>
<dbReference type="Proteomes" id="UP000001026">
    <property type="component" value="Chromosome"/>
</dbReference>
<dbReference type="GO" id="GO:0005737">
    <property type="term" value="C:cytoplasm"/>
    <property type="evidence" value="ECO:0007669"/>
    <property type="project" value="UniProtKB-SubCell"/>
</dbReference>
<dbReference type="GO" id="GO:0005524">
    <property type="term" value="F:ATP binding"/>
    <property type="evidence" value="ECO:0007669"/>
    <property type="project" value="UniProtKB-KW"/>
</dbReference>
<dbReference type="GO" id="GO:0004595">
    <property type="term" value="F:pantetheine-phosphate adenylyltransferase activity"/>
    <property type="evidence" value="ECO:0007669"/>
    <property type="project" value="UniProtKB-UniRule"/>
</dbReference>
<dbReference type="GO" id="GO:0015937">
    <property type="term" value="P:coenzyme A biosynthetic process"/>
    <property type="evidence" value="ECO:0007669"/>
    <property type="project" value="UniProtKB-UniRule"/>
</dbReference>
<dbReference type="CDD" id="cd02163">
    <property type="entry name" value="PPAT"/>
    <property type="match status" value="1"/>
</dbReference>
<dbReference type="Gene3D" id="3.40.50.620">
    <property type="entry name" value="HUPs"/>
    <property type="match status" value="1"/>
</dbReference>
<dbReference type="HAMAP" id="MF_00151">
    <property type="entry name" value="PPAT_bact"/>
    <property type="match status" value="1"/>
</dbReference>
<dbReference type="InterPro" id="IPR004821">
    <property type="entry name" value="Cyt_trans-like"/>
</dbReference>
<dbReference type="InterPro" id="IPR001980">
    <property type="entry name" value="PPAT"/>
</dbReference>
<dbReference type="InterPro" id="IPR014729">
    <property type="entry name" value="Rossmann-like_a/b/a_fold"/>
</dbReference>
<dbReference type="NCBIfam" id="TIGR01510">
    <property type="entry name" value="coaD_prev_kdtB"/>
    <property type="match status" value="1"/>
</dbReference>
<dbReference type="NCBIfam" id="TIGR00125">
    <property type="entry name" value="cyt_tran_rel"/>
    <property type="match status" value="1"/>
</dbReference>
<dbReference type="PANTHER" id="PTHR21342">
    <property type="entry name" value="PHOSPHOPANTETHEINE ADENYLYLTRANSFERASE"/>
    <property type="match status" value="1"/>
</dbReference>
<dbReference type="PANTHER" id="PTHR21342:SF1">
    <property type="entry name" value="PHOSPHOPANTETHEINE ADENYLYLTRANSFERASE"/>
    <property type="match status" value="1"/>
</dbReference>
<dbReference type="Pfam" id="PF01467">
    <property type="entry name" value="CTP_transf_like"/>
    <property type="match status" value="1"/>
</dbReference>
<dbReference type="PRINTS" id="PR01020">
    <property type="entry name" value="LPSBIOSNTHSS"/>
</dbReference>
<dbReference type="SUPFAM" id="SSF52374">
    <property type="entry name" value="Nucleotidylyl transferase"/>
    <property type="match status" value="1"/>
</dbReference>
<comment type="function">
    <text evidence="1">Reversibly transfers an adenylyl group from ATP to 4'-phosphopantetheine, yielding dephospho-CoA (dPCoA) and pyrophosphate.</text>
</comment>
<comment type="catalytic activity">
    <reaction evidence="1">
        <text>(R)-4'-phosphopantetheine + ATP + H(+) = 3'-dephospho-CoA + diphosphate</text>
        <dbReference type="Rhea" id="RHEA:19801"/>
        <dbReference type="ChEBI" id="CHEBI:15378"/>
        <dbReference type="ChEBI" id="CHEBI:30616"/>
        <dbReference type="ChEBI" id="CHEBI:33019"/>
        <dbReference type="ChEBI" id="CHEBI:57328"/>
        <dbReference type="ChEBI" id="CHEBI:61723"/>
        <dbReference type="EC" id="2.7.7.3"/>
    </reaction>
</comment>
<comment type="cofactor">
    <cofactor evidence="1">
        <name>Mg(2+)</name>
        <dbReference type="ChEBI" id="CHEBI:18420"/>
    </cofactor>
</comment>
<comment type="pathway">
    <text evidence="1">Cofactor biosynthesis; coenzyme A biosynthesis; CoA from (R)-pantothenate: step 4/5.</text>
</comment>
<comment type="subunit">
    <text evidence="1">Homohexamer.</text>
</comment>
<comment type="subcellular location">
    <subcellularLocation>
        <location evidence="1">Cytoplasm</location>
    </subcellularLocation>
</comment>
<comment type="similarity">
    <text evidence="1">Belongs to the bacterial CoaD family.</text>
</comment>
<keyword id="KW-0067">ATP-binding</keyword>
<keyword id="KW-0173">Coenzyme A biosynthesis</keyword>
<keyword id="KW-0963">Cytoplasm</keyword>
<keyword id="KW-0460">Magnesium</keyword>
<keyword id="KW-0547">Nucleotide-binding</keyword>
<keyword id="KW-0548">Nucleotidyltransferase</keyword>
<keyword id="KW-0808">Transferase</keyword>
<gene>
    <name evidence="1" type="primary">coaD</name>
    <name type="ordered locus">PMM0884</name>
</gene>
<accession>Q7V1I7</accession>